<gene>
    <name evidence="1" type="primary">gatB</name>
    <name type="ordered locus">Pmen_0853</name>
</gene>
<dbReference type="EC" id="6.3.5.-" evidence="1"/>
<dbReference type="EMBL" id="CP000680">
    <property type="protein sequence ID" value="ABP83621.1"/>
    <property type="molecule type" value="Genomic_DNA"/>
</dbReference>
<dbReference type="SMR" id="A4XQK5"/>
<dbReference type="STRING" id="399739.Pmen_0853"/>
<dbReference type="KEGG" id="pmy:Pmen_0853"/>
<dbReference type="PATRIC" id="fig|399739.8.peg.861"/>
<dbReference type="eggNOG" id="COG0064">
    <property type="taxonomic scope" value="Bacteria"/>
</dbReference>
<dbReference type="HOGENOM" id="CLU_019240_0_0_6"/>
<dbReference type="OrthoDB" id="9804078at2"/>
<dbReference type="GO" id="GO:0050566">
    <property type="term" value="F:asparaginyl-tRNA synthase (glutamine-hydrolyzing) activity"/>
    <property type="evidence" value="ECO:0007669"/>
    <property type="project" value="RHEA"/>
</dbReference>
<dbReference type="GO" id="GO:0005524">
    <property type="term" value="F:ATP binding"/>
    <property type="evidence" value="ECO:0007669"/>
    <property type="project" value="UniProtKB-KW"/>
</dbReference>
<dbReference type="GO" id="GO:0050567">
    <property type="term" value="F:glutaminyl-tRNA synthase (glutamine-hydrolyzing) activity"/>
    <property type="evidence" value="ECO:0007669"/>
    <property type="project" value="UniProtKB-UniRule"/>
</dbReference>
<dbReference type="GO" id="GO:0070681">
    <property type="term" value="P:glutaminyl-tRNAGln biosynthesis via transamidation"/>
    <property type="evidence" value="ECO:0007669"/>
    <property type="project" value="TreeGrafter"/>
</dbReference>
<dbReference type="GO" id="GO:0006412">
    <property type="term" value="P:translation"/>
    <property type="evidence" value="ECO:0007669"/>
    <property type="project" value="UniProtKB-UniRule"/>
</dbReference>
<dbReference type="FunFam" id="1.10.10.410:FF:000001">
    <property type="entry name" value="Aspartyl/glutamyl-tRNA(Asn/Gln) amidotransferase subunit B"/>
    <property type="match status" value="1"/>
</dbReference>
<dbReference type="FunFam" id="1.10.150.380:FF:000001">
    <property type="entry name" value="Aspartyl/glutamyl-tRNA(Asn/Gln) amidotransferase subunit B"/>
    <property type="match status" value="1"/>
</dbReference>
<dbReference type="Gene3D" id="1.10.10.410">
    <property type="match status" value="1"/>
</dbReference>
<dbReference type="Gene3D" id="1.10.150.380">
    <property type="entry name" value="GatB domain, N-terminal subdomain"/>
    <property type="match status" value="1"/>
</dbReference>
<dbReference type="HAMAP" id="MF_00121">
    <property type="entry name" value="GatB"/>
    <property type="match status" value="1"/>
</dbReference>
<dbReference type="InterPro" id="IPR017959">
    <property type="entry name" value="Asn/Gln-tRNA_amidoTrfase_suB/E"/>
</dbReference>
<dbReference type="InterPro" id="IPR006075">
    <property type="entry name" value="Asn/Gln-tRNA_Trfase_suB/E_cat"/>
</dbReference>
<dbReference type="InterPro" id="IPR018027">
    <property type="entry name" value="Asn/Gln_amidotransferase"/>
</dbReference>
<dbReference type="InterPro" id="IPR003789">
    <property type="entry name" value="Asn/Gln_tRNA_amidoTrase-B-like"/>
</dbReference>
<dbReference type="InterPro" id="IPR004413">
    <property type="entry name" value="GatB"/>
</dbReference>
<dbReference type="InterPro" id="IPR042114">
    <property type="entry name" value="GatB_C_1"/>
</dbReference>
<dbReference type="InterPro" id="IPR023168">
    <property type="entry name" value="GatB_Yqey_C_2"/>
</dbReference>
<dbReference type="InterPro" id="IPR017958">
    <property type="entry name" value="Gln-tRNA_amidoTrfase_suB_CS"/>
</dbReference>
<dbReference type="InterPro" id="IPR014746">
    <property type="entry name" value="Gln_synth/guanido_kin_cat_dom"/>
</dbReference>
<dbReference type="NCBIfam" id="TIGR00133">
    <property type="entry name" value="gatB"/>
    <property type="match status" value="1"/>
</dbReference>
<dbReference type="NCBIfam" id="NF004012">
    <property type="entry name" value="PRK05477.1-2"/>
    <property type="match status" value="1"/>
</dbReference>
<dbReference type="NCBIfam" id="NF004014">
    <property type="entry name" value="PRK05477.1-4"/>
    <property type="match status" value="1"/>
</dbReference>
<dbReference type="NCBIfam" id="NF004015">
    <property type="entry name" value="PRK05477.1-5"/>
    <property type="match status" value="1"/>
</dbReference>
<dbReference type="PANTHER" id="PTHR11659">
    <property type="entry name" value="GLUTAMYL-TRNA GLN AMIDOTRANSFERASE SUBUNIT B MITOCHONDRIAL AND PROKARYOTIC PET112-RELATED"/>
    <property type="match status" value="1"/>
</dbReference>
<dbReference type="PANTHER" id="PTHR11659:SF0">
    <property type="entry name" value="GLUTAMYL-TRNA(GLN) AMIDOTRANSFERASE SUBUNIT B, MITOCHONDRIAL"/>
    <property type="match status" value="1"/>
</dbReference>
<dbReference type="Pfam" id="PF02934">
    <property type="entry name" value="GatB_N"/>
    <property type="match status" value="1"/>
</dbReference>
<dbReference type="Pfam" id="PF02637">
    <property type="entry name" value="GatB_Yqey"/>
    <property type="match status" value="1"/>
</dbReference>
<dbReference type="SMART" id="SM00845">
    <property type="entry name" value="GatB_Yqey"/>
    <property type="match status" value="1"/>
</dbReference>
<dbReference type="SUPFAM" id="SSF89095">
    <property type="entry name" value="GatB/YqeY motif"/>
    <property type="match status" value="1"/>
</dbReference>
<dbReference type="SUPFAM" id="SSF55931">
    <property type="entry name" value="Glutamine synthetase/guanido kinase"/>
    <property type="match status" value="1"/>
</dbReference>
<dbReference type="PROSITE" id="PS01234">
    <property type="entry name" value="GATB"/>
    <property type="match status" value="1"/>
</dbReference>
<feature type="chain" id="PRO_1000016023" description="Aspartyl/glutamyl-tRNA(Asn/Gln) amidotransferase subunit B">
    <location>
        <begin position="1"/>
        <end position="481"/>
    </location>
</feature>
<protein>
    <recommendedName>
        <fullName evidence="1">Aspartyl/glutamyl-tRNA(Asn/Gln) amidotransferase subunit B</fullName>
        <shortName evidence="1">Asp/Glu-ADT subunit B</shortName>
        <ecNumber evidence="1">6.3.5.-</ecNumber>
    </recommendedName>
</protein>
<comment type="function">
    <text evidence="1">Allows the formation of correctly charged Asn-tRNA(Asn) or Gln-tRNA(Gln) through the transamidation of misacylated Asp-tRNA(Asn) or Glu-tRNA(Gln) in organisms which lack either or both of asparaginyl-tRNA or glutaminyl-tRNA synthetases. The reaction takes place in the presence of glutamine and ATP through an activated phospho-Asp-tRNA(Asn) or phospho-Glu-tRNA(Gln).</text>
</comment>
<comment type="catalytic activity">
    <reaction evidence="1">
        <text>L-glutamyl-tRNA(Gln) + L-glutamine + ATP + H2O = L-glutaminyl-tRNA(Gln) + L-glutamate + ADP + phosphate + H(+)</text>
        <dbReference type="Rhea" id="RHEA:17521"/>
        <dbReference type="Rhea" id="RHEA-COMP:9681"/>
        <dbReference type="Rhea" id="RHEA-COMP:9684"/>
        <dbReference type="ChEBI" id="CHEBI:15377"/>
        <dbReference type="ChEBI" id="CHEBI:15378"/>
        <dbReference type="ChEBI" id="CHEBI:29985"/>
        <dbReference type="ChEBI" id="CHEBI:30616"/>
        <dbReference type="ChEBI" id="CHEBI:43474"/>
        <dbReference type="ChEBI" id="CHEBI:58359"/>
        <dbReference type="ChEBI" id="CHEBI:78520"/>
        <dbReference type="ChEBI" id="CHEBI:78521"/>
        <dbReference type="ChEBI" id="CHEBI:456216"/>
    </reaction>
</comment>
<comment type="catalytic activity">
    <reaction evidence="1">
        <text>L-aspartyl-tRNA(Asn) + L-glutamine + ATP + H2O = L-asparaginyl-tRNA(Asn) + L-glutamate + ADP + phosphate + 2 H(+)</text>
        <dbReference type="Rhea" id="RHEA:14513"/>
        <dbReference type="Rhea" id="RHEA-COMP:9674"/>
        <dbReference type="Rhea" id="RHEA-COMP:9677"/>
        <dbReference type="ChEBI" id="CHEBI:15377"/>
        <dbReference type="ChEBI" id="CHEBI:15378"/>
        <dbReference type="ChEBI" id="CHEBI:29985"/>
        <dbReference type="ChEBI" id="CHEBI:30616"/>
        <dbReference type="ChEBI" id="CHEBI:43474"/>
        <dbReference type="ChEBI" id="CHEBI:58359"/>
        <dbReference type="ChEBI" id="CHEBI:78515"/>
        <dbReference type="ChEBI" id="CHEBI:78516"/>
        <dbReference type="ChEBI" id="CHEBI:456216"/>
    </reaction>
</comment>
<comment type="subunit">
    <text evidence="1">Heterotrimer of A, B and C subunits.</text>
</comment>
<comment type="similarity">
    <text evidence="1">Belongs to the GatB/GatE family. GatB subfamily.</text>
</comment>
<evidence type="ECO:0000255" key="1">
    <source>
        <dbReference type="HAMAP-Rule" id="MF_00121"/>
    </source>
</evidence>
<keyword id="KW-0067">ATP-binding</keyword>
<keyword id="KW-0436">Ligase</keyword>
<keyword id="KW-0547">Nucleotide-binding</keyword>
<keyword id="KW-0648">Protein biosynthesis</keyword>
<proteinExistence type="inferred from homology"/>
<reference key="1">
    <citation type="submission" date="2007-04" db="EMBL/GenBank/DDBJ databases">
        <title>Complete sequence of Pseudomonas mendocina ymp.</title>
        <authorList>
            <consortium name="US DOE Joint Genome Institute"/>
            <person name="Copeland A."/>
            <person name="Lucas S."/>
            <person name="Lapidus A."/>
            <person name="Barry K."/>
            <person name="Glavina del Rio T."/>
            <person name="Dalin E."/>
            <person name="Tice H."/>
            <person name="Pitluck S."/>
            <person name="Kiss H."/>
            <person name="Brettin T."/>
            <person name="Detter J.C."/>
            <person name="Bruce D."/>
            <person name="Han C."/>
            <person name="Schmutz J."/>
            <person name="Larimer F."/>
            <person name="Land M."/>
            <person name="Hauser L."/>
            <person name="Kyrpides N."/>
            <person name="Mikhailova N."/>
            <person name="Hersman L."/>
            <person name="Dubois J."/>
            <person name="Maurice P."/>
            <person name="Richardson P."/>
        </authorList>
    </citation>
    <scope>NUCLEOTIDE SEQUENCE [LARGE SCALE GENOMIC DNA]</scope>
    <source>
        <strain>ymp</strain>
    </source>
</reference>
<sequence length="481" mass="52830">MQWETVIGLEIHAQLSTQSKIFSASATSFGAEPNTQASLIDLGMPGTLPVLNAEAVRMAVKFGLAIDAHIAPQNVFARKNYFYPDLPKGYQTSQMDHPIVGKGHLDITLEDGTVKRIGITRAHLEEDAGKSLHEDFHGMSGIDLNRAGTPLLEIVSEPDIRSAKEAVAYVKAIHALVRYLGICDGNMAEGSLRCDCNVSVRPKGQEAFGTRAEIKNVNSFRFIEKAINHEIQRQIELIEDGGKVIQETRLYDPNKDETRSMRGKEEANDYRYFPCPDLLPVVIEQSFLDEVRSQLPELPTQKRERFQSQYGLSTYDASVLSASREMAEYFEEVAKVCGDAKLAANWVMGELSSLLNKEGLEIEQSPVSAEHLGGMILRIKDNTISGKIAKMVFEAMAAGEGSADAIIESKGLKQVTDSGAIEAMLDEVLAANAEQVEQYRASDEAKRGKMFGFFVGQAMKASKGKANPGQVNELLKKKLEG</sequence>
<accession>A4XQK5</accession>
<name>GATB_ECTM1</name>
<organism>
    <name type="scientific">Ectopseudomonas mendocina (strain ymp)</name>
    <name type="common">Pseudomonas mendocina</name>
    <dbReference type="NCBI Taxonomy" id="399739"/>
    <lineage>
        <taxon>Bacteria</taxon>
        <taxon>Pseudomonadati</taxon>
        <taxon>Pseudomonadota</taxon>
        <taxon>Gammaproteobacteria</taxon>
        <taxon>Pseudomonadales</taxon>
        <taxon>Pseudomonadaceae</taxon>
        <taxon>Ectopseudomonas</taxon>
    </lineage>
</organism>